<name>Y1023_LACGA</name>
<evidence type="ECO:0000255" key="1">
    <source>
        <dbReference type="HAMAP-Rule" id="MF_01575"/>
    </source>
</evidence>
<dbReference type="EMBL" id="CP000413">
    <property type="protein sequence ID" value="ABJ60398.1"/>
    <property type="molecule type" value="Genomic_DNA"/>
</dbReference>
<dbReference type="RefSeq" id="WP_003652966.1">
    <property type="nucleotide sequence ID" value="NZ_WBMG01000008.1"/>
</dbReference>
<dbReference type="SMR" id="Q043H4"/>
<dbReference type="GeneID" id="29639600"/>
<dbReference type="KEGG" id="lga:LGAS_1023"/>
<dbReference type="HOGENOM" id="CLU_105319_0_0_9"/>
<dbReference type="BioCyc" id="LGAS324831:G1G6Y-1023-MONOMER"/>
<dbReference type="Proteomes" id="UP000000664">
    <property type="component" value="Chromosome"/>
</dbReference>
<dbReference type="Gene3D" id="3.40.50.450">
    <property type="match status" value="1"/>
</dbReference>
<dbReference type="HAMAP" id="MF_01575">
    <property type="entry name" value="UPF0398"/>
    <property type="match status" value="1"/>
</dbReference>
<dbReference type="InterPro" id="IPR010697">
    <property type="entry name" value="YspA"/>
</dbReference>
<dbReference type="NCBIfam" id="NF010181">
    <property type="entry name" value="PRK13660.1"/>
    <property type="match status" value="1"/>
</dbReference>
<dbReference type="PANTHER" id="PTHR38440:SF1">
    <property type="entry name" value="UPF0398 PROTEIN SPR0331"/>
    <property type="match status" value="1"/>
</dbReference>
<dbReference type="PANTHER" id="PTHR38440">
    <property type="entry name" value="UPF0398 PROTEIN YPSA"/>
    <property type="match status" value="1"/>
</dbReference>
<dbReference type="Pfam" id="PF06908">
    <property type="entry name" value="YpsA"/>
    <property type="match status" value="1"/>
</dbReference>
<dbReference type="PIRSF" id="PIRSF021290">
    <property type="entry name" value="DUF1273"/>
    <property type="match status" value="1"/>
</dbReference>
<dbReference type="SUPFAM" id="SSF102405">
    <property type="entry name" value="MCP/YpsA-like"/>
    <property type="match status" value="1"/>
</dbReference>
<feature type="chain" id="PRO_1000069213" description="UPF0398 protein LGAS_1023">
    <location>
        <begin position="1"/>
        <end position="189"/>
    </location>
</feature>
<gene>
    <name type="ordered locus">LGAS_1023</name>
</gene>
<protein>
    <recommendedName>
        <fullName evidence="1">UPF0398 protein LGAS_1023</fullName>
    </recommendedName>
</protein>
<comment type="similarity">
    <text evidence="1">Belongs to the UPF0398 family.</text>
</comment>
<accession>Q043H4</accession>
<proteinExistence type="inferred from homology"/>
<organism>
    <name type="scientific">Lactobacillus gasseri (strain ATCC 33323 / DSM 20243 / BCRC 14619 / CIP 102991 / JCM 1131 / KCTC 3163 / NCIMB 11718 / NCTC 13722 / AM63)</name>
    <dbReference type="NCBI Taxonomy" id="324831"/>
    <lineage>
        <taxon>Bacteria</taxon>
        <taxon>Bacillati</taxon>
        <taxon>Bacillota</taxon>
        <taxon>Bacilli</taxon>
        <taxon>Lactobacillales</taxon>
        <taxon>Lactobacillaceae</taxon>
        <taxon>Lactobacillus</taxon>
    </lineage>
</organism>
<sequence>MKRLWVTGYRSYELSIFSDKDPKLTVIKYALTNYFKSLLEEGKIDWIISGANLGIEQWALEAAIQLQNEYSVHTALMTPYLEFSKRWNENNQMKYQNLTEQVDFTASTSNYPYMSPAQLKNYQSFMLEHTDRAVLIYDPEHPGKPKYDYEAIQKYQEGHEYPVDIIDFYDLQESAEEYEENHRQENNFY</sequence>
<reference key="1">
    <citation type="journal article" date="2006" name="Proc. Natl. Acad. Sci. U.S.A.">
        <title>Comparative genomics of the lactic acid bacteria.</title>
        <authorList>
            <person name="Makarova K.S."/>
            <person name="Slesarev A."/>
            <person name="Wolf Y.I."/>
            <person name="Sorokin A."/>
            <person name="Mirkin B."/>
            <person name="Koonin E.V."/>
            <person name="Pavlov A."/>
            <person name="Pavlova N."/>
            <person name="Karamychev V."/>
            <person name="Polouchine N."/>
            <person name="Shakhova V."/>
            <person name="Grigoriev I."/>
            <person name="Lou Y."/>
            <person name="Rohksar D."/>
            <person name="Lucas S."/>
            <person name="Huang K."/>
            <person name="Goodstein D.M."/>
            <person name="Hawkins T."/>
            <person name="Plengvidhya V."/>
            <person name="Welker D."/>
            <person name="Hughes J."/>
            <person name="Goh Y."/>
            <person name="Benson A."/>
            <person name="Baldwin K."/>
            <person name="Lee J.-H."/>
            <person name="Diaz-Muniz I."/>
            <person name="Dosti B."/>
            <person name="Smeianov V."/>
            <person name="Wechter W."/>
            <person name="Barabote R."/>
            <person name="Lorca G."/>
            <person name="Altermann E."/>
            <person name="Barrangou R."/>
            <person name="Ganesan B."/>
            <person name="Xie Y."/>
            <person name="Rawsthorne H."/>
            <person name="Tamir D."/>
            <person name="Parker C."/>
            <person name="Breidt F."/>
            <person name="Broadbent J.R."/>
            <person name="Hutkins R."/>
            <person name="O'Sullivan D."/>
            <person name="Steele J."/>
            <person name="Unlu G."/>
            <person name="Saier M.H. Jr."/>
            <person name="Klaenhammer T."/>
            <person name="Richardson P."/>
            <person name="Kozyavkin S."/>
            <person name="Weimer B.C."/>
            <person name="Mills D.A."/>
        </authorList>
    </citation>
    <scope>NUCLEOTIDE SEQUENCE [LARGE SCALE GENOMIC DNA]</scope>
    <source>
        <strain>ATCC 33323 / DSM 20243 / BCRC 14619 / CIP 102991 / JCM 1131 / KCTC 3163 / NCIMB 11718 / NCTC 13722 / AM63</strain>
    </source>
</reference>